<name>FMT_FRAAA</name>
<protein>
    <recommendedName>
        <fullName evidence="1">Methionyl-tRNA formyltransferase</fullName>
        <ecNumber evidence="1">2.1.2.9</ecNumber>
    </recommendedName>
</protein>
<proteinExistence type="inferred from homology"/>
<dbReference type="EC" id="2.1.2.9" evidence="1"/>
<dbReference type="EMBL" id="CT573213">
    <property type="protein sequence ID" value="CAJ63858.1"/>
    <property type="molecule type" value="Genomic_DNA"/>
</dbReference>
<dbReference type="RefSeq" id="WP_011606320.1">
    <property type="nucleotide sequence ID" value="NC_008278.1"/>
</dbReference>
<dbReference type="SMR" id="Q0RF89"/>
<dbReference type="STRING" id="326424.FRAAL5225"/>
<dbReference type="KEGG" id="fal:FRAAL5225"/>
<dbReference type="eggNOG" id="COG0223">
    <property type="taxonomic scope" value="Bacteria"/>
</dbReference>
<dbReference type="HOGENOM" id="CLU_033347_1_0_11"/>
<dbReference type="OrthoDB" id="9802815at2"/>
<dbReference type="Proteomes" id="UP000000657">
    <property type="component" value="Chromosome"/>
</dbReference>
<dbReference type="GO" id="GO:0005829">
    <property type="term" value="C:cytosol"/>
    <property type="evidence" value="ECO:0007669"/>
    <property type="project" value="TreeGrafter"/>
</dbReference>
<dbReference type="GO" id="GO:0004479">
    <property type="term" value="F:methionyl-tRNA formyltransferase activity"/>
    <property type="evidence" value="ECO:0007669"/>
    <property type="project" value="UniProtKB-UniRule"/>
</dbReference>
<dbReference type="CDD" id="cd08646">
    <property type="entry name" value="FMT_core_Met-tRNA-FMT_N"/>
    <property type="match status" value="1"/>
</dbReference>
<dbReference type="CDD" id="cd08704">
    <property type="entry name" value="Met_tRNA_FMT_C"/>
    <property type="match status" value="1"/>
</dbReference>
<dbReference type="FunFam" id="3.40.50.12230:FF:000001">
    <property type="entry name" value="Methionyl-tRNA formyltransferase"/>
    <property type="match status" value="1"/>
</dbReference>
<dbReference type="Gene3D" id="3.40.50.12230">
    <property type="match status" value="1"/>
</dbReference>
<dbReference type="HAMAP" id="MF_00182">
    <property type="entry name" value="Formyl_trans"/>
    <property type="match status" value="1"/>
</dbReference>
<dbReference type="InterPro" id="IPR005794">
    <property type="entry name" value="Fmt"/>
</dbReference>
<dbReference type="InterPro" id="IPR005793">
    <property type="entry name" value="Formyl_trans_C"/>
</dbReference>
<dbReference type="InterPro" id="IPR002376">
    <property type="entry name" value="Formyl_transf_N"/>
</dbReference>
<dbReference type="InterPro" id="IPR036477">
    <property type="entry name" value="Formyl_transf_N_sf"/>
</dbReference>
<dbReference type="InterPro" id="IPR011034">
    <property type="entry name" value="Formyl_transferase-like_C_sf"/>
</dbReference>
<dbReference type="InterPro" id="IPR044135">
    <property type="entry name" value="Met-tRNA-FMT_C"/>
</dbReference>
<dbReference type="InterPro" id="IPR041711">
    <property type="entry name" value="Met-tRNA-FMT_N"/>
</dbReference>
<dbReference type="NCBIfam" id="TIGR00460">
    <property type="entry name" value="fmt"/>
    <property type="match status" value="1"/>
</dbReference>
<dbReference type="PANTHER" id="PTHR11138">
    <property type="entry name" value="METHIONYL-TRNA FORMYLTRANSFERASE"/>
    <property type="match status" value="1"/>
</dbReference>
<dbReference type="PANTHER" id="PTHR11138:SF5">
    <property type="entry name" value="METHIONYL-TRNA FORMYLTRANSFERASE, MITOCHONDRIAL"/>
    <property type="match status" value="1"/>
</dbReference>
<dbReference type="Pfam" id="PF02911">
    <property type="entry name" value="Formyl_trans_C"/>
    <property type="match status" value="1"/>
</dbReference>
<dbReference type="Pfam" id="PF00551">
    <property type="entry name" value="Formyl_trans_N"/>
    <property type="match status" value="1"/>
</dbReference>
<dbReference type="SUPFAM" id="SSF50486">
    <property type="entry name" value="FMT C-terminal domain-like"/>
    <property type="match status" value="1"/>
</dbReference>
<dbReference type="SUPFAM" id="SSF53328">
    <property type="entry name" value="Formyltransferase"/>
    <property type="match status" value="1"/>
</dbReference>
<reference key="1">
    <citation type="journal article" date="2007" name="Genome Res.">
        <title>Genome characteristics of facultatively symbiotic Frankia sp. strains reflect host range and host plant biogeography.</title>
        <authorList>
            <person name="Normand P."/>
            <person name="Lapierre P."/>
            <person name="Tisa L.S."/>
            <person name="Gogarten J.P."/>
            <person name="Alloisio N."/>
            <person name="Bagnarol E."/>
            <person name="Bassi C.A."/>
            <person name="Berry A.M."/>
            <person name="Bickhart D.M."/>
            <person name="Choisne N."/>
            <person name="Couloux A."/>
            <person name="Cournoyer B."/>
            <person name="Cruveiller S."/>
            <person name="Daubin V."/>
            <person name="Demange N."/>
            <person name="Francino M.P."/>
            <person name="Goltsman E."/>
            <person name="Huang Y."/>
            <person name="Kopp O.R."/>
            <person name="Labarre L."/>
            <person name="Lapidus A."/>
            <person name="Lavire C."/>
            <person name="Marechal J."/>
            <person name="Martinez M."/>
            <person name="Mastronunzio J.E."/>
            <person name="Mullin B.C."/>
            <person name="Niemann J."/>
            <person name="Pujic P."/>
            <person name="Rawnsley T."/>
            <person name="Rouy Z."/>
            <person name="Schenowitz C."/>
            <person name="Sellstedt A."/>
            <person name="Tavares F."/>
            <person name="Tomkins J.P."/>
            <person name="Vallenet D."/>
            <person name="Valverde C."/>
            <person name="Wall L.G."/>
            <person name="Wang Y."/>
            <person name="Medigue C."/>
            <person name="Benson D.R."/>
        </authorList>
    </citation>
    <scope>NUCLEOTIDE SEQUENCE [LARGE SCALE GENOMIC DNA]</scope>
    <source>
        <strain>DSM 45986 / CECT 9034 / ACN14a</strain>
    </source>
</reference>
<accession>Q0RF89</accession>
<feature type="chain" id="PRO_1000020061" description="Methionyl-tRNA formyltransferase">
    <location>
        <begin position="1"/>
        <end position="331"/>
    </location>
</feature>
<feature type="region of interest" description="Disordered" evidence="2">
    <location>
        <begin position="312"/>
        <end position="331"/>
    </location>
</feature>
<feature type="binding site" evidence="1">
    <location>
        <begin position="110"/>
        <end position="113"/>
    </location>
    <ligand>
        <name>(6S)-5,6,7,8-tetrahydrofolate</name>
        <dbReference type="ChEBI" id="CHEBI:57453"/>
    </ligand>
</feature>
<gene>
    <name evidence="1" type="primary">fmt</name>
    <name type="ordered locus">FRAAL5225</name>
</gene>
<evidence type="ECO:0000255" key="1">
    <source>
        <dbReference type="HAMAP-Rule" id="MF_00182"/>
    </source>
</evidence>
<evidence type="ECO:0000256" key="2">
    <source>
        <dbReference type="SAM" id="MobiDB-lite"/>
    </source>
</evidence>
<keyword id="KW-0648">Protein biosynthesis</keyword>
<keyword id="KW-1185">Reference proteome</keyword>
<keyword id="KW-0808">Transferase</keyword>
<comment type="function">
    <text evidence="1">Attaches a formyl group to the free amino group of methionyl-tRNA(fMet). The formyl group appears to play a dual role in the initiator identity of N-formylmethionyl-tRNA by promoting its recognition by IF2 and preventing the misappropriation of this tRNA by the elongation apparatus.</text>
</comment>
<comment type="catalytic activity">
    <reaction evidence="1">
        <text>L-methionyl-tRNA(fMet) + (6R)-10-formyltetrahydrofolate = N-formyl-L-methionyl-tRNA(fMet) + (6S)-5,6,7,8-tetrahydrofolate + H(+)</text>
        <dbReference type="Rhea" id="RHEA:24380"/>
        <dbReference type="Rhea" id="RHEA-COMP:9952"/>
        <dbReference type="Rhea" id="RHEA-COMP:9953"/>
        <dbReference type="ChEBI" id="CHEBI:15378"/>
        <dbReference type="ChEBI" id="CHEBI:57453"/>
        <dbReference type="ChEBI" id="CHEBI:78530"/>
        <dbReference type="ChEBI" id="CHEBI:78844"/>
        <dbReference type="ChEBI" id="CHEBI:195366"/>
        <dbReference type="EC" id="2.1.2.9"/>
    </reaction>
</comment>
<comment type="similarity">
    <text evidence="1">Belongs to the Fmt family.</text>
</comment>
<sequence>MRLVFAGTPAVALPSLRALIDSPRHEVVAVVTRPDRPAGRGRKIKPPPVHLLADEAGIPVLSPERPRDPDFLAALTDLAPDCCPVVAYGALLPREALAIPRHGWVNLHFSLLPAYRGAAPVQRTVLAGDDLTGASVFQIEPAMDSGPVFGVVTERVRPTDTSGDLLDRLADSGAHLLAAVMDGIDDGTLQAVPQPAEGVSFAPKLTAQDALIDWTLPAVAVDRLTRAAAPAPGAWTVFRDRRIKIGPVRLGAQNVPDELAPGRLVALADGAVAVGTGTAPVLLDEVRPEGRGPMKAADWARGARLTDDDLLHAPAERVSAAGSPAGAGGAP</sequence>
<organism>
    <name type="scientific">Frankia alni (strain DSM 45986 / CECT 9034 / ACN14a)</name>
    <dbReference type="NCBI Taxonomy" id="326424"/>
    <lineage>
        <taxon>Bacteria</taxon>
        <taxon>Bacillati</taxon>
        <taxon>Actinomycetota</taxon>
        <taxon>Actinomycetes</taxon>
        <taxon>Frankiales</taxon>
        <taxon>Frankiaceae</taxon>
        <taxon>Frankia</taxon>
    </lineage>
</organism>